<dbReference type="EMBL" id="X83692">
    <property type="protein sequence ID" value="CAA58666.1"/>
    <property type="molecule type" value="Genomic_DNA"/>
</dbReference>
<dbReference type="PIR" id="S51154">
    <property type="entry name" value="S51154"/>
</dbReference>
<dbReference type="SMR" id="Q31721"/>
<dbReference type="GO" id="GO:0005743">
    <property type="term" value="C:mitochondrial inner membrane"/>
    <property type="evidence" value="ECO:0007669"/>
    <property type="project" value="UniProtKB-SubCell"/>
</dbReference>
<dbReference type="GO" id="GO:0045259">
    <property type="term" value="C:proton-transporting ATP synthase complex"/>
    <property type="evidence" value="ECO:0007669"/>
    <property type="project" value="UniProtKB-KW"/>
</dbReference>
<dbReference type="GO" id="GO:0046933">
    <property type="term" value="F:proton-transporting ATP synthase activity, rotational mechanism"/>
    <property type="evidence" value="ECO:0007669"/>
    <property type="project" value="TreeGrafter"/>
</dbReference>
<dbReference type="Gene3D" id="1.20.120.220">
    <property type="entry name" value="ATP synthase, F0 complex, subunit A"/>
    <property type="match status" value="1"/>
</dbReference>
<dbReference type="InterPro" id="IPR045083">
    <property type="entry name" value="ATP_synth_F0_asu_bact/mt"/>
</dbReference>
<dbReference type="InterPro" id="IPR035908">
    <property type="entry name" value="F0_ATP_A_sf"/>
</dbReference>
<dbReference type="PANTHER" id="PTHR11410">
    <property type="entry name" value="ATP SYNTHASE SUBUNIT A"/>
    <property type="match status" value="1"/>
</dbReference>
<dbReference type="PANTHER" id="PTHR11410:SF0">
    <property type="entry name" value="ATP SYNTHASE SUBUNIT A"/>
    <property type="match status" value="1"/>
</dbReference>
<dbReference type="SUPFAM" id="SSF81336">
    <property type="entry name" value="F1F0 ATP synthase subunit A"/>
    <property type="match status" value="1"/>
</dbReference>
<feature type="chain" id="PRO_0000082098" description="ATP synthase subunit a">
    <location>
        <begin position="1" status="less than"/>
        <end position="58"/>
    </location>
</feature>
<feature type="transmembrane region" description="Helical" evidence="1">
    <location>
        <begin position="11"/>
        <end position="31"/>
    </location>
</feature>
<feature type="transmembrane region" description="Helical" evidence="1">
    <location>
        <begin position="35"/>
        <end position="55"/>
    </location>
</feature>
<feature type="non-terminal residue">
    <location>
        <position position="1"/>
    </location>
</feature>
<geneLocation type="mitochondrion"/>
<accession>Q31721</accession>
<protein>
    <recommendedName>
        <fullName>ATP synthase subunit a</fullName>
    </recommendedName>
    <alternativeName>
        <fullName>F-ATPase protein 6</fullName>
    </alternativeName>
</protein>
<sequence>GFAWTMLCMNEIFYFIGALGPLFIVLALTGLELGVAILQAYVFTILICIYLNDAINLH</sequence>
<keyword id="KW-0066">ATP synthesis</keyword>
<keyword id="KW-0138">CF(0)</keyword>
<keyword id="KW-0375">Hydrogen ion transport</keyword>
<keyword id="KW-0406">Ion transport</keyword>
<keyword id="KW-0472">Membrane</keyword>
<keyword id="KW-0496">Mitochondrion</keyword>
<keyword id="KW-0999">Mitochondrion inner membrane</keyword>
<keyword id="KW-0812">Transmembrane</keyword>
<keyword id="KW-1133">Transmembrane helix</keyword>
<keyword id="KW-0813">Transport</keyword>
<gene>
    <name type="primary">ATP6</name>
</gene>
<reference key="1">
    <citation type="journal article" date="1996" name="Plant Mol. Biol.">
        <title>Alloplasmic male-sterile Brassica lines containing B. tournefortii mitochondria express an ORF 3' of the atp6 gene and a 32 kDa protein. off.</title>
        <authorList>
            <person name="Landgren M."/>
            <person name="Zetterstrand M."/>
            <person name="Sundberg E."/>
            <person name="Glimelius K."/>
        </authorList>
    </citation>
    <scope>NUCLEOTIDE SEQUENCE [GENOMIC DNA]</scope>
</reference>
<organism>
    <name type="scientific">Brassica tournefortii</name>
    <name type="common">Wild turnip</name>
    <name type="synonym">Sahara mustard</name>
    <dbReference type="NCBI Taxonomy" id="37661"/>
    <lineage>
        <taxon>Eukaryota</taxon>
        <taxon>Viridiplantae</taxon>
        <taxon>Streptophyta</taxon>
        <taxon>Embryophyta</taxon>
        <taxon>Tracheophyta</taxon>
        <taxon>Spermatophyta</taxon>
        <taxon>Magnoliopsida</taxon>
        <taxon>eudicotyledons</taxon>
        <taxon>Gunneridae</taxon>
        <taxon>Pentapetalae</taxon>
        <taxon>rosids</taxon>
        <taxon>malvids</taxon>
        <taxon>Brassicales</taxon>
        <taxon>Brassicaceae</taxon>
        <taxon>Brassiceae</taxon>
        <taxon>Brassica</taxon>
    </lineage>
</organism>
<comment type="function">
    <text>Mitochondrial membrane ATP synthase (F(1)F(0) ATP synthase or Complex V) produces ATP from ADP in the presence of a proton gradient across the membrane which is generated by electron transport complexes of the respiratory chain. F-type ATPases consist of two structural domains, F(1) - containing the extramembraneous catalytic core and F(0) - containing the membrane proton channel, linked together by a central stalk and a peripheral stalk. During catalysis, ATP synthesis in the catalytic domain of F(1) is coupled via a rotary mechanism of the central stalk subunits to proton translocation. Key component of the proton channel; it may play a direct role in the translocation of protons across the membrane.</text>
</comment>
<comment type="subunit">
    <text>F-type ATPases have 2 components, CF(1) - the catalytic core - and CF(0) - the membrane proton channel. CF(1) has five subunits: alpha(3), beta(3), gamma(1), delta(1), epsilon(1). CF(0) has three main subunits: a, b and c.</text>
</comment>
<comment type="subcellular location">
    <subcellularLocation>
        <location>Mitochondrion inner membrane</location>
        <topology>Multi-pass membrane protein</topology>
    </subcellularLocation>
</comment>
<comment type="similarity">
    <text evidence="2">Belongs to the ATPase A chain family.</text>
</comment>
<name>ATP6_BRATO</name>
<proteinExistence type="inferred from homology"/>
<evidence type="ECO:0000255" key="1"/>
<evidence type="ECO:0000305" key="2"/>